<keyword id="KW-0963">Cytoplasm</keyword>
<keyword id="KW-0378">Hydrolase</keyword>
<keyword id="KW-0694">RNA-binding</keyword>
<keyword id="KW-0820">tRNA-binding</keyword>
<proteinExistence type="inferred from homology"/>
<evidence type="ECO:0000255" key="1">
    <source>
        <dbReference type="HAMAP-Rule" id="MF_00083"/>
    </source>
</evidence>
<feature type="chain" id="PRO_0000264029" description="Peptidyl-tRNA hydrolase">
    <location>
        <begin position="1"/>
        <end position="189"/>
    </location>
</feature>
<feature type="active site" description="Proton acceptor" evidence="1">
    <location>
        <position position="19"/>
    </location>
</feature>
<feature type="binding site" evidence="1">
    <location>
        <position position="14"/>
    </location>
    <ligand>
        <name>tRNA</name>
        <dbReference type="ChEBI" id="CHEBI:17843"/>
    </ligand>
</feature>
<feature type="binding site" evidence="1">
    <location>
        <position position="64"/>
    </location>
    <ligand>
        <name>tRNA</name>
        <dbReference type="ChEBI" id="CHEBI:17843"/>
    </ligand>
</feature>
<feature type="binding site" evidence="1">
    <location>
        <position position="66"/>
    </location>
    <ligand>
        <name>tRNA</name>
        <dbReference type="ChEBI" id="CHEBI:17843"/>
    </ligand>
</feature>
<feature type="binding site" evidence="1">
    <location>
        <position position="112"/>
    </location>
    <ligand>
        <name>tRNA</name>
        <dbReference type="ChEBI" id="CHEBI:17843"/>
    </ligand>
</feature>
<feature type="site" description="Discriminates between blocked and unblocked aminoacyl-tRNA" evidence="1">
    <location>
        <position position="9"/>
    </location>
</feature>
<feature type="site" description="Stabilizes the basic form of H active site to accept a proton" evidence="1">
    <location>
        <position position="91"/>
    </location>
</feature>
<gene>
    <name evidence="1" type="primary">pth</name>
    <name type="ordered locus">DET0595</name>
</gene>
<accession>Q3Z8W2</accession>
<dbReference type="EC" id="3.1.1.29" evidence="1"/>
<dbReference type="EMBL" id="CP000027">
    <property type="protein sequence ID" value="AAW40112.1"/>
    <property type="molecule type" value="Genomic_DNA"/>
</dbReference>
<dbReference type="RefSeq" id="WP_010936370.1">
    <property type="nucleotide sequence ID" value="NC_002936.3"/>
</dbReference>
<dbReference type="SMR" id="Q3Z8W2"/>
<dbReference type="FunCoup" id="Q3Z8W2">
    <property type="interactions" value="321"/>
</dbReference>
<dbReference type="STRING" id="243164.DET0595"/>
<dbReference type="GeneID" id="3230075"/>
<dbReference type="KEGG" id="det:DET0595"/>
<dbReference type="PATRIC" id="fig|243164.10.peg.573"/>
<dbReference type="eggNOG" id="COG0193">
    <property type="taxonomic scope" value="Bacteria"/>
</dbReference>
<dbReference type="HOGENOM" id="CLU_062456_4_1_0"/>
<dbReference type="InParanoid" id="Q3Z8W2"/>
<dbReference type="Proteomes" id="UP000008289">
    <property type="component" value="Chromosome"/>
</dbReference>
<dbReference type="GO" id="GO:0005737">
    <property type="term" value="C:cytoplasm"/>
    <property type="evidence" value="ECO:0007669"/>
    <property type="project" value="UniProtKB-SubCell"/>
</dbReference>
<dbReference type="GO" id="GO:0004045">
    <property type="term" value="F:peptidyl-tRNA hydrolase activity"/>
    <property type="evidence" value="ECO:0007669"/>
    <property type="project" value="UniProtKB-UniRule"/>
</dbReference>
<dbReference type="GO" id="GO:0000049">
    <property type="term" value="F:tRNA binding"/>
    <property type="evidence" value="ECO:0007669"/>
    <property type="project" value="UniProtKB-UniRule"/>
</dbReference>
<dbReference type="GO" id="GO:0006515">
    <property type="term" value="P:protein quality control for misfolded or incompletely synthesized proteins"/>
    <property type="evidence" value="ECO:0007669"/>
    <property type="project" value="UniProtKB-UniRule"/>
</dbReference>
<dbReference type="GO" id="GO:0072344">
    <property type="term" value="P:rescue of stalled ribosome"/>
    <property type="evidence" value="ECO:0007669"/>
    <property type="project" value="UniProtKB-UniRule"/>
</dbReference>
<dbReference type="CDD" id="cd00462">
    <property type="entry name" value="PTH"/>
    <property type="match status" value="1"/>
</dbReference>
<dbReference type="FunFam" id="3.40.50.1470:FF:000001">
    <property type="entry name" value="Peptidyl-tRNA hydrolase"/>
    <property type="match status" value="1"/>
</dbReference>
<dbReference type="Gene3D" id="3.40.50.1470">
    <property type="entry name" value="Peptidyl-tRNA hydrolase"/>
    <property type="match status" value="1"/>
</dbReference>
<dbReference type="HAMAP" id="MF_00083">
    <property type="entry name" value="Pept_tRNA_hydro_bact"/>
    <property type="match status" value="1"/>
</dbReference>
<dbReference type="InterPro" id="IPR001328">
    <property type="entry name" value="Pept_tRNA_hydro"/>
</dbReference>
<dbReference type="InterPro" id="IPR036416">
    <property type="entry name" value="Pept_tRNA_hydro_sf"/>
</dbReference>
<dbReference type="NCBIfam" id="TIGR00447">
    <property type="entry name" value="pth"/>
    <property type="match status" value="1"/>
</dbReference>
<dbReference type="PANTHER" id="PTHR17224">
    <property type="entry name" value="PEPTIDYL-TRNA HYDROLASE"/>
    <property type="match status" value="1"/>
</dbReference>
<dbReference type="PANTHER" id="PTHR17224:SF1">
    <property type="entry name" value="PEPTIDYL-TRNA HYDROLASE"/>
    <property type="match status" value="1"/>
</dbReference>
<dbReference type="Pfam" id="PF01195">
    <property type="entry name" value="Pept_tRNA_hydro"/>
    <property type="match status" value="1"/>
</dbReference>
<dbReference type="SUPFAM" id="SSF53178">
    <property type="entry name" value="Peptidyl-tRNA hydrolase-like"/>
    <property type="match status" value="1"/>
</dbReference>
<organism>
    <name type="scientific">Dehalococcoides mccartyi (strain ATCC BAA-2266 / KCTC 15142 / 195)</name>
    <name type="common">Dehalococcoides ethenogenes (strain 195)</name>
    <dbReference type="NCBI Taxonomy" id="243164"/>
    <lineage>
        <taxon>Bacteria</taxon>
        <taxon>Bacillati</taxon>
        <taxon>Chloroflexota</taxon>
        <taxon>Dehalococcoidia</taxon>
        <taxon>Dehalococcoidales</taxon>
        <taxon>Dehalococcoidaceae</taxon>
        <taxon>Dehalococcoides</taxon>
    </lineage>
</organism>
<protein>
    <recommendedName>
        <fullName evidence="1">Peptidyl-tRNA hydrolase</fullName>
        <shortName evidence="1">Pth</shortName>
        <ecNumber evidence="1">3.1.1.29</ecNumber>
    </recommendedName>
</protein>
<sequence length="189" mass="20521">MKLIIGLGNPGKEYSGNRHNVGFQCLSRFAKDNHISFDKKCCLSRTGSGRINDEEIVLAKPQTYMNLSGKAASQLLRRYNLKAADIIVVQDDLDLPAGKIRLRLGGSAGGHNGISSIITDIGTKEFIRLKIGIGKPDSRNNGTEVVDHVLGNFGGEEREIMDKAITRASEALTCLLTFGLDTASNRFNS</sequence>
<comment type="function">
    <text evidence="1">Hydrolyzes ribosome-free peptidyl-tRNAs (with 1 or more amino acids incorporated), which drop off the ribosome during protein synthesis, or as a result of ribosome stalling.</text>
</comment>
<comment type="function">
    <text evidence="1">Catalyzes the release of premature peptidyl moieties from peptidyl-tRNA molecules trapped in stalled 50S ribosomal subunits, and thus maintains levels of free tRNAs and 50S ribosomes.</text>
</comment>
<comment type="catalytic activity">
    <reaction evidence="1">
        <text>an N-acyl-L-alpha-aminoacyl-tRNA + H2O = an N-acyl-L-amino acid + a tRNA + H(+)</text>
        <dbReference type="Rhea" id="RHEA:54448"/>
        <dbReference type="Rhea" id="RHEA-COMP:10123"/>
        <dbReference type="Rhea" id="RHEA-COMP:13883"/>
        <dbReference type="ChEBI" id="CHEBI:15377"/>
        <dbReference type="ChEBI" id="CHEBI:15378"/>
        <dbReference type="ChEBI" id="CHEBI:59874"/>
        <dbReference type="ChEBI" id="CHEBI:78442"/>
        <dbReference type="ChEBI" id="CHEBI:138191"/>
        <dbReference type="EC" id="3.1.1.29"/>
    </reaction>
</comment>
<comment type="subunit">
    <text evidence="1">Monomer.</text>
</comment>
<comment type="subcellular location">
    <subcellularLocation>
        <location evidence="1">Cytoplasm</location>
    </subcellularLocation>
</comment>
<comment type="similarity">
    <text evidence="1">Belongs to the PTH family.</text>
</comment>
<name>PTH_DEHM1</name>
<reference key="1">
    <citation type="journal article" date="2005" name="Science">
        <title>Genome sequence of the PCE-dechlorinating bacterium Dehalococcoides ethenogenes.</title>
        <authorList>
            <person name="Seshadri R."/>
            <person name="Adrian L."/>
            <person name="Fouts D.E."/>
            <person name="Eisen J.A."/>
            <person name="Phillippy A.M."/>
            <person name="Methe B.A."/>
            <person name="Ward N.L."/>
            <person name="Nelson W.C."/>
            <person name="DeBoy R.T."/>
            <person name="Khouri H.M."/>
            <person name="Kolonay J.F."/>
            <person name="Dodson R.J."/>
            <person name="Daugherty S.C."/>
            <person name="Brinkac L.M."/>
            <person name="Sullivan S.A."/>
            <person name="Madupu R."/>
            <person name="Nelson K.E."/>
            <person name="Kang K.H."/>
            <person name="Impraim M."/>
            <person name="Tran K."/>
            <person name="Robinson J.M."/>
            <person name="Forberger H.A."/>
            <person name="Fraser C.M."/>
            <person name="Zinder S.H."/>
            <person name="Heidelberg J.F."/>
        </authorList>
    </citation>
    <scope>NUCLEOTIDE SEQUENCE [LARGE SCALE GENOMIC DNA]</scope>
    <source>
        <strain>ATCC BAA-2266 / KCTC 15142 / 195</strain>
    </source>
</reference>